<reference key="1">
    <citation type="submission" date="2008-04" db="EMBL/GenBank/DDBJ databases">
        <title>Complete sequence of chromosome of Methylobacterium populi BJ001.</title>
        <authorList>
            <consortium name="US DOE Joint Genome Institute"/>
            <person name="Copeland A."/>
            <person name="Lucas S."/>
            <person name="Lapidus A."/>
            <person name="Glavina del Rio T."/>
            <person name="Dalin E."/>
            <person name="Tice H."/>
            <person name="Bruce D."/>
            <person name="Goodwin L."/>
            <person name="Pitluck S."/>
            <person name="Chertkov O."/>
            <person name="Brettin T."/>
            <person name="Detter J.C."/>
            <person name="Han C."/>
            <person name="Kuske C.R."/>
            <person name="Schmutz J."/>
            <person name="Larimer F."/>
            <person name="Land M."/>
            <person name="Hauser L."/>
            <person name="Kyrpides N."/>
            <person name="Mikhailova N."/>
            <person name="Marx C."/>
            <person name="Richardson P."/>
        </authorList>
    </citation>
    <scope>NUCLEOTIDE SEQUENCE [LARGE SCALE GENOMIC DNA]</scope>
    <source>
        <strain>ATCC BAA-705 / NCIMB 13946 / BJ001</strain>
    </source>
</reference>
<feature type="chain" id="PRO_1000090163" description="SsrA-binding protein">
    <location>
        <begin position="1"/>
        <end position="157"/>
    </location>
</feature>
<feature type="region of interest" description="Disordered" evidence="2">
    <location>
        <begin position="131"/>
        <end position="157"/>
    </location>
</feature>
<feature type="compositionally biased region" description="Basic and acidic residues" evidence="2">
    <location>
        <begin position="132"/>
        <end position="157"/>
    </location>
</feature>
<organism>
    <name type="scientific">Methylorubrum populi (strain ATCC BAA-705 / NCIMB 13946 / BJ001)</name>
    <name type="common">Methylobacterium populi</name>
    <dbReference type="NCBI Taxonomy" id="441620"/>
    <lineage>
        <taxon>Bacteria</taxon>
        <taxon>Pseudomonadati</taxon>
        <taxon>Pseudomonadota</taxon>
        <taxon>Alphaproteobacteria</taxon>
        <taxon>Hyphomicrobiales</taxon>
        <taxon>Methylobacteriaceae</taxon>
        <taxon>Methylorubrum</taxon>
    </lineage>
</organism>
<proteinExistence type="inferred from homology"/>
<keyword id="KW-0963">Cytoplasm</keyword>
<keyword id="KW-0694">RNA-binding</keyword>
<protein>
    <recommendedName>
        <fullName evidence="1">SsrA-binding protein</fullName>
    </recommendedName>
    <alternativeName>
        <fullName evidence="1">Small protein B</fullName>
    </alternativeName>
</protein>
<gene>
    <name evidence="1" type="primary">smpB</name>
    <name type="ordered locus">Mpop_3388</name>
</gene>
<accession>B1ZJQ3</accession>
<name>SSRP_METPB</name>
<evidence type="ECO:0000255" key="1">
    <source>
        <dbReference type="HAMAP-Rule" id="MF_00023"/>
    </source>
</evidence>
<evidence type="ECO:0000256" key="2">
    <source>
        <dbReference type="SAM" id="MobiDB-lite"/>
    </source>
</evidence>
<sequence length="157" mass="17924">MAPKTEPGRRVVADNRSARFHYAIEDTFEAGIALTGTEVKSLRGGKATIGESYAGPSGNDLMLFNAYIPEYLEANRFNHDTKRPRRLLLHRRQINKLIGATQRQGYTVIPLKIYFNDKGRAKVELGLGKGKQLHDKRESVKQRDWQRDKARLMRDKG</sequence>
<dbReference type="EMBL" id="CP001029">
    <property type="protein sequence ID" value="ACB81539.1"/>
    <property type="molecule type" value="Genomic_DNA"/>
</dbReference>
<dbReference type="RefSeq" id="WP_012455256.1">
    <property type="nucleotide sequence ID" value="NC_010725.1"/>
</dbReference>
<dbReference type="SMR" id="B1ZJQ3"/>
<dbReference type="STRING" id="441620.Mpop_3388"/>
<dbReference type="KEGG" id="mpo:Mpop_3388"/>
<dbReference type="eggNOG" id="COG0691">
    <property type="taxonomic scope" value="Bacteria"/>
</dbReference>
<dbReference type="HOGENOM" id="CLU_108953_0_1_5"/>
<dbReference type="OrthoDB" id="9805462at2"/>
<dbReference type="Proteomes" id="UP000007136">
    <property type="component" value="Chromosome"/>
</dbReference>
<dbReference type="GO" id="GO:0005829">
    <property type="term" value="C:cytosol"/>
    <property type="evidence" value="ECO:0007669"/>
    <property type="project" value="TreeGrafter"/>
</dbReference>
<dbReference type="GO" id="GO:0003723">
    <property type="term" value="F:RNA binding"/>
    <property type="evidence" value="ECO:0007669"/>
    <property type="project" value="UniProtKB-UniRule"/>
</dbReference>
<dbReference type="GO" id="GO:0070929">
    <property type="term" value="P:trans-translation"/>
    <property type="evidence" value="ECO:0007669"/>
    <property type="project" value="UniProtKB-UniRule"/>
</dbReference>
<dbReference type="CDD" id="cd09294">
    <property type="entry name" value="SmpB"/>
    <property type="match status" value="1"/>
</dbReference>
<dbReference type="Gene3D" id="2.40.280.10">
    <property type="match status" value="1"/>
</dbReference>
<dbReference type="HAMAP" id="MF_00023">
    <property type="entry name" value="SmpB"/>
    <property type="match status" value="1"/>
</dbReference>
<dbReference type="InterPro" id="IPR023620">
    <property type="entry name" value="SmpB"/>
</dbReference>
<dbReference type="InterPro" id="IPR000037">
    <property type="entry name" value="SsrA-bd_prot"/>
</dbReference>
<dbReference type="InterPro" id="IPR020081">
    <property type="entry name" value="SsrA-bd_prot_CS"/>
</dbReference>
<dbReference type="NCBIfam" id="NF003843">
    <property type="entry name" value="PRK05422.1"/>
    <property type="match status" value="1"/>
</dbReference>
<dbReference type="NCBIfam" id="TIGR00086">
    <property type="entry name" value="smpB"/>
    <property type="match status" value="1"/>
</dbReference>
<dbReference type="PANTHER" id="PTHR30308:SF2">
    <property type="entry name" value="SSRA-BINDING PROTEIN"/>
    <property type="match status" value="1"/>
</dbReference>
<dbReference type="PANTHER" id="PTHR30308">
    <property type="entry name" value="TMRNA-BINDING COMPONENT OF TRANS-TRANSLATION TAGGING COMPLEX"/>
    <property type="match status" value="1"/>
</dbReference>
<dbReference type="Pfam" id="PF01668">
    <property type="entry name" value="SmpB"/>
    <property type="match status" value="1"/>
</dbReference>
<dbReference type="SUPFAM" id="SSF74982">
    <property type="entry name" value="Small protein B (SmpB)"/>
    <property type="match status" value="1"/>
</dbReference>
<dbReference type="PROSITE" id="PS01317">
    <property type="entry name" value="SSRP"/>
    <property type="match status" value="1"/>
</dbReference>
<comment type="function">
    <text evidence="1">Required for rescue of stalled ribosomes mediated by trans-translation. Binds to transfer-messenger RNA (tmRNA), required for stable association of tmRNA with ribosomes. tmRNA and SmpB together mimic tRNA shape, replacing the anticodon stem-loop with SmpB. tmRNA is encoded by the ssrA gene; the 2 termini fold to resemble tRNA(Ala) and it encodes a 'tag peptide', a short internal open reading frame. During trans-translation Ala-aminoacylated tmRNA acts like a tRNA, entering the A-site of stalled ribosomes, displacing the stalled mRNA. The ribosome then switches to translate the ORF on the tmRNA; the nascent peptide is terminated with the 'tag peptide' encoded by the tmRNA and targeted for degradation. The ribosome is freed to recommence translation, which seems to be the essential function of trans-translation.</text>
</comment>
<comment type="subcellular location">
    <subcellularLocation>
        <location evidence="1">Cytoplasm</location>
    </subcellularLocation>
    <text evidence="1">The tmRNA-SmpB complex associates with stalled 70S ribosomes.</text>
</comment>
<comment type="similarity">
    <text evidence="1">Belongs to the SmpB family.</text>
</comment>